<name>LOLB_PECCP</name>
<comment type="function">
    <text evidence="1">Plays a critical role in the incorporation of lipoproteins in the outer membrane after they are released by the LolA protein.</text>
</comment>
<comment type="subunit">
    <text evidence="1">Monomer.</text>
</comment>
<comment type="subcellular location">
    <subcellularLocation>
        <location evidence="1">Cell outer membrane</location>
        <topology evidence="1">Lipid-anchor</topology>
    </subcellularLocation>
</comment>
<comment type="similarity">
    <text evidence="1">Belongs to the LolB family.</text>
</comment>
<accession>C6DHY3</accession>
<keyword id="KW-0998">Cell outer membrane</keyword>
<keyword id="KW-0143">Chaperone</keyword>
<keyword id="KW-0449">Lipoprotein</keyword>
<keyword id="KW-0472">Membrane</keyword>
<keyword id="KW-0564">Palmitate</keyword>
<keyword id="KW-0653">Protein transport</keyword>
<keyword id="KW-0732">Signal</keyword>
<keyword id="KW-0813">Transport</keyword>
<sequence length="207" mass="23741">MPTNTVRCLRLLPLASVLLAACSVHQPTQTGKSPISPEWQQHQQKVQQLSQYQTRGAFAYISDSKRVSANFFWQDTPPQRYRLLLTNPLGSTELELRAQPDGVQITDNQGKRYVGKDAEYMIQQLTGMAIPLNNLRQWILGIPGDATEFTLDERYLLKTVTYRQGNQNWNVSYQSYNTELTPPLPTSLELVQGEQRIKLKMNNWMVK</sequence>
<gene>
    <name evidence="1" type="primary">lolB</name>
    <name type="ordered locus">PC1_2116</name>
</gene>
<feature type="signal peptide" evidence="1">
    <location>
        <begin position="1"/>
        <end position="21"/>
    </location>
</feature>
<feature type="chain" id="PRO_1000204386" description="Outer-membrane lipoprotein LolB">
    <location>
        <begin position="22"/>
        <end position="207"/>
    </location>
</feature>
<feature type="lipid moiety-binding region" description="N-palmitoyl cysteine" evidence="1">
    <location>
        <position position="22"/>
    </location>
</feature>
<feature type="lipid moiety-binding region" description="S-diacylglycerol cysteine" evidence="1">
    <location>
        <position position="22"/>
    </location>
</feature>
<evidence type="ECO:0000255" key="1">
    <source>
        <dbReference type="HAMAP-Rule" id="MF_00233"/>
    </source>
</evidence>
<reference key="1">
    <citation type="submission" date="2009-07" db="EMBL/GenBank/DDBJ databases">
        <title>Complete sequence of Pectobacterium carotovorum subsp. carotovorum PC1.</title>
        <authorList>
            <consortium name="US DOE Joint Genome Institute"/>
            <person name="Lucas S."/>
            <person name="Copeland A."/>
            <person name="Lapidus A."/>
            <person name="Glavina del Rio T."/>
            <person name="Tice H."/>
            <person name="Bruce D."/>
            <person name="Goodwin L."/>
            <person name="Pitluck S."/>
            <person name="Munk A.C."/>
            <person name="Brettin T."/>
            <person name="Detter J.C."/>
            <person name="Han C."/>
            <person name="Tapia R."/>
            <person name="Larimer F."/>
            <person name="Land M."/>
            <person name="Hauser L."/>
            <person name="Kyrpides N."/>
            <person name="Mikhailova N."/>
            <person name="Balakrishnan V."/>
            <person name="Glasner J."/>
            <person name="Perna N.T."/>
        </authorList>
    </citation>
    <scope>NUCLEOTIDE SEQUENCE [LARGE SCALE GENOMIC DNA]</scope>
    <source>
        <strain>PC1</strain>
    </source>
</reference>
<protein>
    <recommendedName>
        <fullName evidence="1">Outer-membrane lipoprotein LolB</fullName>
    </recommendedName>
</protein>
<organism>
    <name type="scientific">Pectobacterium carotovorum subsp. carotovorum (strain PC1)</name>
    <dbReference type="NCBI Taxonomy" id="561230"/>
    <lineage>
        <taxon>Bacteria</taxon>
        <taxon>Pseudomonadati</taxon>
        <taxon>Pseudomonadota</taxon>
        <taxon>Gammaproteobacteria</taxon>
        <taxon>Enterobacterales</taxon>
        <taxon>Pectobacteriaceae</taxon>
        <taxon>Pectobacterium</taxon>
    </lineage>
</organism>
<proteinExistence type="inferred from homology"/>
<dbReference type="EMBL" id="CP001657">
    <property type="protein sequence ID" value="ACT13156.1"/>
    <property type="molecule type" value="Genomic_DNA"/>
</dbReference>
<dbReference type="RefSeq" id="WP_015840347.1">
    <property type="nucleotide sequence ID" value="NC_012917.1"/>
</dbReference>
<dbReference type="SMR" id="C6DHY3"/>
<dbReference type="STRING" id="561230.PC1_2116"/>
<dbReference type="KEGG" id="pct:PC1_2116"/>
<dbReference type="eggNOG" id="COG3017">
    <property type="taxonomic scope" value="Bacteria"/>
</dbReference>
<dbReference type="HOGENOM" id="CLU_092816_1_1_6"/>
<dbReference type="OrthoDB" id="9797618at2"/>
<dbReference type="Proteomes" id="UP000002736">
    <property type="component" value="Chromosome"/>
</dbReference>
<dbReference type="GO" id="GO:0009279">
    <property type="term" value="C:cell outer membrane"/>
    <property type="evidence" value="ECO:0007669"/>
    <property type="project" value="UniProtKB-SubCell"/>
</dbReference>
<dbReference type="GO" id="GO:0044874">
    <property type="term" value="P:lipoprotein localization to outer membrane"/>
    <property type="evidence" value="ECO:0007669"/>
    <property type="project" value="UniProtKB-UniRule"/>
</dbReference>
<dbReference type="GO" id="GO:0015031">
    <property type="term" value="P:protein transport"/>
    <property type="evidence" value="ECO:0007669"/>
    <property type="project" value="UniProtKB-KW"/>
</dbReference>
<dbReference type="CDD" id="cd16326">
    <property type="entry name" value="LolB"/>
    <property type="match status" value="1"/>
</dbReference>
<dbReference type="Gene3D" id="2.50.20.10">
    <property type="entry name" value="Lipoprotein localisation LolA/LolB/LppX"/>
    <property type="match status" value="1"/>
</dbReference>
<dbReference type="HAMAP" id="MF_00233">
    <property type="entry name" value="LolB"/>
    <property type="match status" value="1"/>
</dbReference>
<dbReference type="InterPro" id="IPR029046">
    <property type="entry name" value="LolA/LolB/LppX"/>
</dbReference>
<dbReference type="InterPro" id="IPR004565">
    <property type="entry name" value="OM_lipoprot_LolB"/>
</dbReference>
<dbReference type="NCBIfam" id="TIGR00548">
    <property type="entry name" value="lolB"/>
    <property type="match status" value="1"/>
</dbReference>
<dbReference type="Pfam" id="PF03550">
    <property type="entry name" value="LolB"/>
    <property type="match status" value="1"/>
</dbReference>
<dbReference type="SUPFAM" id="SSF89392">
    <property type="entry name" value="Prokaryotic lipoproteins and lipoprotein localization factors"/>
    <property type="match status" value="1"/>
</dbReference>
<dbReference type="PROSITE" id="PS51257">
    <property type="entry name" value="PROKAR_LIPOPROTEIN"/>
    <property type="match status" value="1"/>
</dbReference>